<geneLocation type="plasmid" evidence="4"/>
<feature type="signal peptide" evidence="3">
    <location>
        <begin position="1"/>
        <end position="18"/>
    </location>
</feature>
<feature type="chain" id="PRO_0000244512" description="Variable small protein 8" evidence="2">
    <location>
        <begin position="19"/>
        <end position="218"/>
    </location>
</feature>
<feature type="lipid moiety-binding region" description="N-palmitoyl cysteine" evidence="2 8">
    <location>
        <position position="19"/>
    </location>
</feature>
<feature type="lipid moiety-binding region" description="S-diacylglycerol cysteine" evidence="2 8">
    <location>
        <position position="19"/>
    </location>
</feature>
<reference evidence="10" key="1">
    <citation type="journal article" date="1994" name="Cell">
        <title>Antigen diversity in the bacterium B. hermsii through 'somatic' mutations in rearranged vmp genes.</title>
        <authorList>
            <person name="Restrepo B.I."/>
            <person name="Barbour A.G."/>
        </authorList>
    </citation>
    <scope>NUCLEOTIDE SEQUENCE [GENOMIC DNA]</scope>
    <source>
        <strain>ATCC 35209 / HS1</strain>
    </source>
</reference>
<reference evidence="8" key="2">
    <citation type="journal article" date="1998" name="Infect. Immun.">
        <title>Population structure of the relapsing fever spirochete Borrelia hermsii as indicated by polymorphism of two multigene families that encode immunogenic outer surface lipoproteins.</title>
        <authorList>
            <person name="Hinnebusch B.J."/>
            <person name="Barbour A.G."/>
            <person name="Restrepo B.I."/>
            <person name="Schwan T.G."/>
        </authorList>
    </citation>
    <scope>NOMENCLATURE</scope>
</reference>
<protein>
    <recommendedName>
        <fullName evidence="7">Variable small protein 8</fullName>
    </recommendedName>
</protein>
<comment type="function">
    <text evidence="1">The Vlp and Vsp proteins are antigenically distinct proteins, only one vlp or vsp gene is transcriptionally active at any one time. Switching between these genes is a mechanism of host immune response evasion.</text>
</comment>
<comment type="subcellular location">
    <subcellularLocation>
        <location evidence="1">Cell outer membrane</location>
        <topology>Lipid-anchor</topology>
    </subcellularLocation>
</comment>
<comment type="miscellaneous">
    <text evidence="9">Genes for both Vlp and Vsp families are on (usually) unnamed linear plasmids in B.hermsii HS1.</text>
</comment>
<comment type="similarity">
    <text evidence="5">Belongs to the variable small protein (Vsp) family.</text>
</comment>
<organism>
    <name type="scientific">Borrelia hermsii</name>
    <dbReference type="NCBI Taxonomy" id="140"/>
    <lineage>
        <taxon>Bacteria</taxon>
        <taxon>Pseudomonadati</taxon>
        <taxon>Spirochaetota</taxon>
        <taxon>Spirochaetia</taxon>
        <taxon>Spirochaetales</taxon>
        <taxon>Borreliaceae</taxon>
        <taxon>Borrelia</taxon>
    </lineage>
</organism>
<accession>Q45215</accession>
<gene>
    <name evidence="7" type="primary">vsp8</name>
    <name evidence="6" type="synonym">vmp8</name>
</gene>
<proteinExistence type="inferred from homology"/>
<keyword id="KW-0998">Cell outer membrane</keyword>
<keyword id="KW-0449">Lipoprotein</keyword>
<keyword id="KW-0472">Membrane</keyword>
<keyword id="KW-0564">Palmitate</keyword>
<keyword id="KW-0614">Plasmid</keyword>
<keyword id="KW-0732">Signal</keyword>
<dbReference type="EMBL" id="L33899">
    <property type="protein sequence ID" value="AAA59225.1"/>
    <property type="molecule type" value="Genomic_DNA"/>
</dbReference>
<dbReference type="PIR" id="I40310">
    <property type="entry name" value="I40310"/>
</dbReference>
<dbReference type="SMR" id="Q45215"/>
<dbReference type="GO" id="GO:0009279">
    <property type="term" value="C:cell outer membrane"/>
    <property type="evidence" value="ECO:0007669"/>
    <property type="project" value="UniProtKB-SubCell"/>
</dbReference>
<dbReference type="Gene3D" id="1.20.120.240">
    <property type="entry name" value="Lipoprotein, type 6"/>
    <property type="match status" value="1"/>
</dbReference>
<dbReference type="InterPro" id="IPR001800">
    <property type="entry name" value="Lipoprotein_OspC"/>
</dbReference>
<dbReference type="InterPro" id="IPR036437">
    <property type="entry name" value="OspC-like_sf"/>
</dbReference>
<dbReference type="Pfam" id="PF01441">
    <property type="entry name" value="Lipoprotein_6"/>
    <property type="match status" value="1"/>
</dbReference>
<dbReference type="SUPFAM" id="SSF63515">
    <property type="entry name" value="Outer surface protein C (OspC)"/>
    <property type="match status" value="1"/>
</dbReference>
<dbReference type="PROSITE" id="PS51257">
    <property type="entry name" value="PROKAR_LIPOPROTEIN"/>
    <property type="match status" value="1"/>
</dbReference>
<name>VSP8_BORHE</name>
<evidence type="ECO:0000250" key="1">
    <source>
        <dbReference type="UniProtKB" id="P21875"/>
    </source>
</evidence>
<evidence type="ECO:0000255" key="2"/>
<evidence type="ECO:0000255" key="3">
    <source>
        <dbReference type="PROSITE-ProRule" id="PRU00303"/>
    </source>
</evidence>
<evidence type="ECO:0000269" key="4">
    <source>
    </source>
</evidence>
<evidence type="ECO:0000269" key="5">
    <source>
    </source>
</evidence>
<evidence type="ECO:0000303" key="6">
    <source>
    </source>
</evidence>
<evidence type="ECO:0000303" key="7">
    <source>
    </source>
</evidence>
<evidence type="ECO:0000305" key="8"/>
<evidence type="ECO:0000305" key="9">
    <source>
    </source>
</evidence>
<evidence type="ECO:0000312" key="10">
    <source>
        <dbReference type="EMBL" id="AAA59225.1"/>
    </source>
</evidence>
<sequence length="218" mass="23366">MRKRISAIIMTLFMVFMSCNNGGPELKSDEVAKSDGTVLDLAKISKKIKDAVEFAASVKEIETLVKSIDELAKAIGKKIKQNSEDLEVDNGKNNKNGELVAGAFQVMLTVKAKLEKLGNTPEISEELKGKITDSKSKCKEFVDKVKADSDISKAEATDEHVKKAIDQVNAPAGEKGVVELVKLNKSIGELLKAANAAAEAAIAELTAPVKAEKPSQNN</sequence>